<organism>
    <name type="scientific">Salmonella dublin (strain CT_02021853)</name>
    <dbReference type="NCBI Taxonomy" id="439851"/>
    <lineage>
        <taxon>Bacteria</taxon>
        <taxon>Pseudomonadati</taxon>
        <taxon>Pseudomonadota</taxon>
        <taxon>Gammaproteobacteria</taxon>
        <taxon>Enterobacterales</taxon>
        <taxon>Enterobacteriaceae</taxon>
        <taxon>Salmonella</taxon>
    </lineage>
</organism>
<accession>B5FIQ3</accession>
<protein>
    <recommendedName>
        <fullName evidence="1">RNase adapter protein RapZ</fullName>
    </recommendedName>
</protein>
<comment type="function">
    <text evidence="1">Modulates the synthesis of GlmS, by affecting the processing and stability of the regulatory small RNA GlmZ. When glucosamine-6-phosphate (GlcN6P) concentrations are high in the cell, RapZ binds GlmZ and targets it to cleavage by RNase E. Consequently, GlmZ is inactivated and unable to activate GlmS synthesis. Under low GlcN6P concentrations, RapZ is sequestered and inactivated by an other regulatory small RNA, GlmY, preventing GlmZ degradation and leading to synthesis of GlmS.</text>
</comment>
<comment type="subunit">
    <text evidence="1">Homotrimer.</text>
</comment>
<comment type="similarity">
    <text evidence="1">Belongs to the RapZ-like family. RapZ subfamily.</text>
</comment>
<reference key="1">
    <citation type="journal article" date="2011" name="J. Bacteriol.">
        <title>Comparative genomics of 28 Salmonella enterica isolates: evidence for CRISPR-mediated adaptive sublineage evolution.</title>
        <authorList>
            <person name="Fricke W.F."/>
            <person name="Mammel M.K."/>
            <person name="McDermott P.F."/>
            <person name="Tartera C."/>
            <person name="White D.G."/>
            <person name="Leclerc J.E."/>
            <person name="Ravel J."/>
            <person name="Cebula T.A."/>
        </authorList>
    </citation>
    <scope>NUCLEOTIDE SEQUENCE [LARGE SCALE GENOMIC DNA]</scope>
    <source>
        <strain>CT_02021853</strain>
    </source>
</reference>
<name>RAPZ_SALDC</name>
<sequence length="284" mass="32464">MVLMIVSGRSGSGKSVALRALEDMGFYCVDNLPVVLLPDLARTLADRQISAAVSIDVRNMPESPEIFEQAMNNLPGAFSPQLLFLDADRNTLIRRYSDTRRLHPLSSKNLSLESAIDKESDLLEPLRSRADLIVDTSEMSVHELAEMLRTRLLGKRERELTMVFESFGFKHGIPIDADYVFDVRFLPNPHWDPKLRPMTGLDKPVAAFLDRHTEVHNFIYQTRSYLELWLPMLETNNRSYLTVAIGCTGGKHRSVYIAEQLADYFRSRGKNVQSRHRTLEKRKT</sequence>
<dbReference type="EMBL" id="CP001144">
    <property type="protein sequence ID" value="ACH76551.1"/>
    <property type="molecule type" value="Genomic_DNA"/>
</dbReference>
<dbReference type="RefSeq" id="WP_000243749.1">
    <property type="nucleotide sequence ID" value="NC_011205.1"/>
</dbReference>
<dbReference type="SMR" id="B5FIQ3"/>
<dbReference type="KEGG" id="sed:SeD_A3682"/>
<dbReference type="HOGENOM" id="CLU_059558_1_1_6"/>
<dbReference type="Proteomes" id="UP000008322">
    <property type="component" value="Chromosome"/>
</dbReference>
<dbReference type="GO" id="GO:0005524">
    <property type="term" value="F:ATP binding"/>
    <property type="evidence" value="ECO:0007669"/>
    <property type="project" value="UniProtKB-UniRule"/>
</dbReference>
<dbReference type="GO" id="GO:0005525">
    <property type="term" value="F:GTP binding"/>
    <property type="evidence" value="ECO:0007669"/>
    <property type="project" value="UniProtKB-UniRule"/>
</dbReference>
<dbReference type="GO" id="GO:0003723">
    <property type="term" value="F:RNA binding"/>
    <property type="evidence" value="ECO:0007669"/>
    <property type="project" value="UniProtKB-KW"/>
</dbReference>
<dbReference type="Gene3D" id="3.40.50.300">
    <property type="entry name" value="P-loop containing nucleotide triphosphate hydrolases"/>
    <property type="match status" value="1"/>
</dbReference>
<dbReference type="HAMAP" id="MF_00636">
    <property type="entry name" value="RapZ_like"/>
    <property type="match status" value="1"/>
</dbReference>
<dbReference type="InterPro" id="IPR027417">
    <property type="entry name" value="P-loop_NTPase"/>
</dbReference>
<dbReference type="InterPro" id="IPR005337">
    <property type="entry name" value="RapZ-like"/>
</dbReference>
<dbReference type="InterPro" id="IPR053930">
    <property type="entry name" value="RapZ-like_N"/>
</dbReference>
<dbReference type="InterPro" id="IPR053931">
    <property type="entry name" value="RapZ_C"/>
</dbReference>
<dbReference type="NCBIfam" id="NF003828">
    <property type="entry name" value="PRK05416.1"/>
    <property type="match status" value="1"/>
</dbReference>
<dbReference type="PANTHER" id="PTHR30448">
    <property type="entry name" value="RNASE ADAPTER PROTEIN RAPZ"/>
    <property type="match status" value="1"/>
</dbReference>
<dbReference type="PANTHER" id="PTHR30448:SF0">
    <property type="entry name" value="RNASE ADAPTER PROTEIN RAPZ"/>
    <property type="match status" value="1"/>
</dbReference>
<dbReference type="Pfam" id="PF22740">
    <property type="entry name" value="PapZ_C"/>
    <property type="match status" value="1"/>
</dbReference>
<dbReference type="Pfam" id="PF03668">
    <property type="entry name" value="RapZ-like_N"/>
    <property type="match status" value="1"/>
</dbReference>
<dbReference type="PIRSF" id="PIRSF005052">
    <property type="entry name" value="P-loopkin"/>
    <property type="match status" value="1"/>
</dbReference>
<dbReference type="SUPFAM" id="SSF52540">
    <property type="entry name" value="P-loop containing nucleoside triphosphate hydrolases"/>
    <property type="match status" value="1"/>
</dbReference>
<proteinExistence type="inferred from homology"/>
<evidence type="ECO:0000255" key="1">
    <source>
        <dbReference type="HAMAP-Rule" id="MF_00636"/>
    </source>
</evidence>
<gene>
    <name evidence="1" type="primary">rapZ</name>
    <name type="ordered locus">SeD_A3682</name>
</gene>
<feature type="chain" id="PRO_1000130776" description="RNase adapter protein RapZ">
    <location>
        <begin position="1"/>
        <end position="284"/>
    </location>
</feature>
<feature type="region of interest" description="RNA-binding" evidence="1">
    <location>
        <begin position="266"/>
        <end position="284"/>
    </location>
</feature>
<feature type="binding site" evidence="1">
    <location>
        <begin position="8"/>
        <end position="15"/>
    </location>
    <ligand>
        <name>ATP</name>
        <dbReference type="ChEBI" id="CHEBI:30616"/>
    </ligand>
</feature>
<feature type="binding site" evidence="1">
    <location>
        <begin position="56"/>
        <end position="59"/>
    </location>
    <ligand>
        <name>GTP</name>
        <dbReference type="ChEBI" id="CHEBI:37565"/>
    </ligand>
</feature>
<keyword id="KW-0067">ATP-binding</keyword>
<keyword id="KW-0342">GTP-binding</keyword>
<keyword id="KW-0547">Nucleotide-binding</keyword>
<keyword id="KW-0694">RNA-binding</keyword>